<feature type="chain" id="PRO_1000164856" description="Bifunctional protein PyrR">
    <location>
        <begin position="1"/>
        <end position="173"/>
    </location>
</feature>
<feature type="short sequence motif" description="PRPP-binding" evidence="1">
    <location>
        <begin position="93"/>
        <end position="105"/>
    </location>
</feature>
<reference key="1">
    <citation type="journal article" date="2009" name="BMC Genomics">
        <title>Evidence for niche adaptation in the genome of the bovine pathogen Streptococcus uberis.</title>
        <authorList>
            <person name="Ward P.N."/>
            <person name="Holden M.T.G."/>
            <person name="Leigh J.A."/>
            <person name="Lennard N."/>
            <person name="Bignell A."/>
            <person name="Barron A."/>
            <person name="Clark L."/>
            <person name="Quail M.A."/>
            <person name="Woodward J."/>
            <person name="Barrell B.G."/>
            <person name="Egan S.A."/>
            <person name="Field T.R."/>
            <person name="Maskell D."/>
            <person name="Kehoe M."/>
            <person name="Dowson C.G."/>
            <person name="Chanter N."/>
            <person name="Whatmore A.M."/>
            <person name="Bentley S.D."/>
            <person name="Parkhill J."/>
        </authorList>
    </citation>
    <scope>NUCLEOTIDE SEQUENCE [LARGE SCALE GENOMIC DNA]</scope>
    <source>
        <strain>ATCC BAA-854 / 0140J</strain>
    </source>
</reference>
<sequence length="173" mass="19470">MKKKEIVDDVTMKRAITRITYEIIERNKSLDNLVLAGIKTRGVYLARRIQERLKQLEGIELPIGELDIKPFRDDMKVEEDTTDMPFDINGKDVILVDDVLYTGRTIRAAIDNLVSLGRPARVGLAVLVDRGHRELPIRADYVGKNIPTSSIEEIVVEVIEVDGKDCVSIVDPS</sequence>
<keyword id="KW-0328">Glycosyltransferase</keyword>
<keyword id="KW-1185">Reference proteome</keyword>
<keyword id="KW-0694">RNA-binding</keyword>
<keyword id="KW-0804">Transcription</keyword>
<keyword id="KW-0805">Transcription regulation</keyword>
<keyword id="KW-0806">Transcription termination</keyword>
<keyword id="KW-0808">Transferase</keyword>
<dbReference type="EC" id="2.4.2.9" evidence="1"/>
<dbReference type="EMBL" id="AM946015">
    <property type="protein sequence ID" value="CAR41657.1"/>
    <property type="molecule type" value="Genomic_DNA"/>
</dbReference>
<dbReference type="RefSeq" id="WP_012658248.1">
    <property type="nucleotide sequence ID" value="NC_012004.1"/>
</dbReference>
<dbReference type="SMR" id="B9DU60"/>
<dbReference type="STRING" id="218495.SUB0731"/>
<dbReference type="GeneID" id="93826015"/>
<dbReference type="KEGG" id="sub:SUB0731"/>
<dbReference type="eggNOG" id="COG2065">
    <property type="taxonomic scope" value="Bacteria"/>
</dbReference>
<dbReference type="HOGENOM" id="CLU_094234_2_1_9"/>
<dbReference type="OrthoDB" id="9802227at2"/>
<dbReference type="Proteomes" id="UP000000449">
    <property type="component" value="Chromosome"/>
</dbReference>
<dbReference type="GO" id="GO:0003723">
    <property type="term" value="F:RNA binding"/>
    <property type="evidence" value="ECO:0007669"/>
    <property type="project" value="UniProtKB-UniRule"/>
</dbReference>
<dbReference type="GO" id="GO:0004845">
    <property type="term" value="F:uracil phosphoribosyltransferase activity"/>
    <property type="evidence" value="ECO:0007669"/>
    <property type="project" value="UniProtKB-UniRule"/>
</dbReference>
<dbReference type="GO" id="GO:0006353">
    <property type="term" value="P:DNA-templated transcription termination"/>
    <property type="evidence" value="ECO:0007669"/>
    <property type="project" value="UniProtKB-UniRule"/>
</dbReference>
<dbReference type="CDD" id="cd06223">
    <property type="entry name" value="PRTases_typeI"/>
    <property type="match status" value="1"/>
</dbReference>
<dbReference type="FunFam" id="3.40.50.2020:FF:000020">
    <property type="entry name" value="Bifunctional protein PyrR"/>
    <property type="match status" value="1"/>
</dbReference>
<dbReference type="Gene3D" id="3.40.50.2020">
    <property type="match status" value="1"/>
</dbReference>
<dbReference type="HAMAP" id="MF_01219">
    <property type="entry name" value="PyrR"/>
    <property type="match status" value="1"/>
</dbReference>
<dbReference type="InterPro" id="IPR000836">
    <property type="entry name" value="PRibTrfase_dom"/>
</dbReference>
<dbReference type="InterPro" id="IPR029057">
    <property type="entry name" value="PRTase-like"/>
</dbReference>
<dbReference type="InterPro" id="IPR023050">
    <property type="entry name" value="PyrR"/>
</dbReference>
<dbReference type="InterPro" id="IPR050137">
    <property type="entry name" value="PyrR_bifunctional"/>
</dbReference>
<dbReference type="NCBIfam" id="NF003548">
    <property type="entry name" value="PRK05205.1-4"/>
    <property type="match status" value="1"/>
</dbReference>
<dbReference type="NCBIfam" id="NF003549">
    <property type="entry name" value="PRK05205.1-5"/>
    <property type="match status" value="1"/>
</dbReference>
<dbReference type="PANTHER" id="PTHR11608">
    <property type="entry name" value="BIFUNCTIONAL PROTEIN PYRR"/>
    <property type="match status" value="1"/>
</dbReference>
<dbReference type="PANTHER" id="PTHR11608:SF0">
    <property type="entry name" value="BIFUNCTIONAL PROTEIN PYRR"/>
    <property type="match status" value="1"/>
</dbReference>
<dbReference type="Pfam" id="PF00156">
    <property type="entry name" value="Pribosyltran"/>
    <property type="match status" value="1"/>
</dbReference>
<dbReference type="SUPFAM" id="SSF53271">
    <property type="entry name" value="PRTase-like"/>
    <property type="match status" value="1"/>
</dbReference>
<gene>
    <name evidence="1" type="primary">pyrR</name>
    <name type="ordered locus">SUB0731</name>
</gene>
<comment type="function">
    <text evidence="1">Regulates transcriptional attenuation of the pyrimidine nucleotide (pyr) operon by binding in a uridine-dependent manner to specific sites on pyr mRNA. This disrupts an antiterminator hairpin in the RNA and favors formation of a downstream transcription terminator, leading to a reduced expression of downstream genes.</text>
</comment>
<comment type="function">
    <text evidence="1">Also displays a weak uracil phosphoribosyltransferase activity which is not physiologically significant.</text>
</comment>
<comment type="catalytic activity">
    <reaction evidence="1">
        <text>UMP + diphosphate = 5-phospho-alpha-D-ribose 1-diphosphate + uracil</text>
        <dbReference type="Rhea" id="RHEA:13017"/>
        <dbReference type="ChEBI" id="CHEBI:17568"/>
        <dbReference type="ChEBI" id="CHEBI:33019"/>
        <dbReference type="ChEBI" id="CHEBI:57865"/>
        <dbReference type="ChEBI" id="CHEBI:58017"/>
        <dbReference type="EC" id="2.4.2.9"/>
    </reaction>
</comment>
<comment type="subunit">
    <text evidence="1">Homodimer and homohexamer; in equilibrium.</text>
</comment>
<comment type="similarity">
    <text evidence="1">Belongs to the purine/pyrimidine phosphoribosyltransferase family. PyrR subfamily.</text>
</comment>
<accession>B9DU60</accession>
<evidence type="ECO:0000255" key="1">
    <source>
        <dbReference type="HAMAP-Rule" id="MF_01219"/>
    </source>
</evidence>
<name>PYRR_STRU0</name>
<organism>
    <name type="scientific">Streptococcus uberis (strain ATCC BAA-854 / 0140J)</name>
    <dbReference type="NCBI Taxonomy" id="218495"/>
    <lineage>
        <taxon>Bacteria</taxon>
        <taxon>Bacillati</taxon>
        <taxon>Bacillota</taxon>
        <taxon>Bacilli</taxon>
        <taxon>Lactobacillales</taxon>
        <taxon>Streptococcaceae</taxon>
        <taxon>Streptococcus</taxon>
    </lineage>
</organism>
<proteinExistence type="inferred from homology"/>
<protein>
    <recommendedName>
        <fullName evidence="1">Bifunctional protein PyrR</fullName>
    </recommendedName>
    <domain>
        <recommendedName>
            <fullName evidence="1">Pyrimidine operon regulatory protein</fullName>
        </recommendedName>
    </domain>
    <domain>
        <recommendedName>
            <fullName evidence="1">Uracil phosphoribosyltransferase</fullName>
            <shortName evidence="1">UPRTase</shortName>
            <ecNumber evidence="1">2.4.2.9</ecNumber>
        </recommendedName>
    </domain>
</protein>